<accession>Q5DUB1</accession>
<sequence>MDNVLPGDSDLFPNISTNSSESNQFVQPAWQIVLWAAAYTVIVVTSVVGNVVVMWIILAHKRMRTVTNYFLVNLAFAEASMAAFNTVVNFTYAVHNEWYYGLFYCKFHNFFPIAAVFASIYSMTAVAFDRYMAIIHPLQPRLSATATKVVIFVIWVLALLLAFPQGYYSTTETMPGRVVCMIEWPEHPNRTYEKAYHICVTVLIYFLPLLVIGYAYTVVGITLWASEIPGDSSDRYHEQVSAKRKVVKMMIVVVCTFAICWLPFHVFFLLPYINPDLYVKKFIQQVYLAIMWLAMSSTMYNPIIYCCLNDRFRLGFKHAFRCCPFISAGDYEGLEMKSTRYLQTQGSVYKVSRLETTISTVVGAHEDEAEEGPKATPSSLDLTSNGSSRSNSKTMTESSSFYSNMLA</sequence>
<dbReference type="EMBL" id="AJ884917">
    <property type="protein sequence ID" value="CAI58658.1"/>
    <property type="molecule type" value="mRNA"/>
</dbReference>
<dbReference type="SMR" id="Q5DUB1"/>
<dbReference type="ChEMBL" id="CHEMBL1764942"/>
<dbReference type="DrugCentral" id="Q5DUB1"/>
<dbReference type="GlyCosmos" id="Q5DUB1">
    <property type="glycosylation" value="4 sites, No reported glycans"/>
</dbReference>
<dbReference type="Ensembl" id="ENSMUGT00000029267">
    <property type="protein sequence ID" value="ENSMUGP00000025517"/>
    <property type="gene ID" value="ENSMUGG00000021264"/>
</dbReference>
<dbReference type="OrthoDB" id="5981855at2759"/>
<dbReference type="GO" id="GO:0005886">
    <property type="term" value="C:plasma membrane"/>
    <property type="evidence" value="ECO:0007669"/>
    <property type="project" value="UniProtKB-SubCell"/>
</dbReference>
<dbReference type="GO" id="GO:0097225">
    <property type="term" value="C:sperm midpiece"/>
    <property type="evidence" value="ECO:0007669"/>
    <property type="project" value="TreeGrafter"/>
</dbReference>
<dbReference type="GO" id="GO:0016496">
    <property type="term" value="F:substance P receptor activity"/>
    <property type="evidence" value="ECO:0007669"/>
    <property type="project" value="TreeGrafter"/>
</dbReference>
<dbReference type="GO" id="GO:1902093">
    <property type="term" value="P:positive regulation of flagellated sperm motility"/>
    <property type="evidence" value="ECO:0007669"/>
    <property type="project" value="TreeGrafter"/>
</dbReference>
<dbReference type="GO" id="GO:0070472">
    <property type="term" value="P:regulation of uterine smooth muscle contraction"/>
    <property type="evidence" value="ECO:0007669"/>
    <property type="project" value="UniProtKB-ARBA"/>
</dbReference>
<dbReference type="CDD" id="cd16002">
    <property type="entry name" value="7tmA_NK1R"/>
    <property type="match status" value="1"/>
</dbReference>
<dbReference type="FunFam" id="1.20.1070.10:FF:000078">
    <property type="entry name" value="Neuromedin-K receptor"/>
    <property type="match status" value="1"/>
</dbReference>
<dbReference type="Gene3D" id="1.20.1070.10">
    <property type="entry name" value="Rhodopsin 7-helix transmembrane proteins"/>
    <property type="match status" value="1"/>
</dbReference>
<dbReference type="InterPro" id="IPR000276">
    <property type="entry name" value="GPCR_Rhodpsn"/>
</dbReference>
<dbReference type="InterPro" id="IPR017452">
    <property type="entry name" value="GPCR_Rhodpsn_7TM"/>
</dbReference>
<dbReference type="InterPro" id="IPR001681">
    <property type="entry name" value="Neurokn_rcpt"/>
</dbReference>
<dbReference type="InterPro" id="IPR000046">
    <property type="entry name" value="NK1_rcpt"/>
</dbReference>
<dbReference type="PANTHER" id="PTHR46925">
    <property type="entry name" value="G-PROTEIN COUPLED RECEPTOR TKR-1-RELATED"/>
    <property type="match status" value="1"/>
</dbReference>
<dbReference type="PANTHER" id="PTHR46925:SF4">
    <property type="entry name" value="SUBSTANCE-P RECEPTOR"/>
    <property type="match status" value="1"/>
</dbReference>
<dbReference type="Pfam" id="PF00001">
    <property type="entry name" value="7tm_1"/>
    <property type="match status" value="1"/>
</dbReference>
<dbReference type="PRINTS" id="PR00237">
    <property type="entry name" value="GPCRRHODOPSN"/>
</dbReference>
<dbReference type="PRINTS" id="PR01024">
    <property type="entry name" value="NEUROKININ1R"/>
</dbReference>
<dbReference type="PRINTS" id="PR00244">
    <property type="entry name" value="NEUROKININR"/>
</dbReference>
<dbReference type="SUPFAM" id="SSF81321">
    <property type="entry name" value="Family A G protein-coupled receptor-like"/>
    <property type="match status" value="1"/>
</dbReference>
<dbReference type="PROSITE" id="PS00237">
    <property type="entry name" value="G_PROTEIN_RECEP_F1_1"/>
    <property type="match status" value="1"/>
</dbReference>
<dbReference type="PROSITE" id="PS50262">
    <property type="entry name" value="G_PROTEIN_RECEP_F1_2"/>
    <property type="match status" value="1"/>
</dbReference>
<comment type="function">
    <text evidence="1">This is a receptor for the tachykinin neuropeptide substance P. It is probably associated with G proteins that activate a phosphatidylinositol-calcium second messenger system (By similarity).</text>
</comment>
<comment type="subunit">
    <text evidence="1">Interacts with ARRB1.</text>
</comment>
<comment type="subcellular location">
    <subcellularLocation>
        <location evidence="1">Cell membrane</location>
        <topology evidence="1">Multi-pass membrane protein</topology>
    </subcellularLocation>
</comment>
<comment type="similarity">
    <text evidence="3">Belongs to the G-protein coupled receptor 1 family.</text>
</comment>
<proteinExistence type="evidence at transcript level"/>
<gene>
    <name type="primary">TACR1</name>
</gene>
<reference key="1">
    <citation type="submission" date="2005-02" db="EMBL/GenBank/DDBJ databases">
        <authorList>
            <person name="Engberg S."/>
            <person name="Drmota T."/>
        </authorList>
    </citation>
    <scope>NUCLEOTIDE SEQUENCE [MRNA]</scope>
</reference>
<evidence type="ECO:0000250" key="1"/>
<evidence type="ECO:0000255" key="2"/>
<evidence type="ECO:0000255" key="3">
    <source>
        <dbReference type="PROSITE-ProRule" id="PRU00521"/>
    </source>
</evidence>
<evidence type="ECO:0000256" key="4">
    <source>
        <dbReference type="SAM" id="MobiDB-lite"/>
    </source>
</evidence>
<feature type="chain" id="PRO_0000069886" description="Substance-P receptor">
    <location>
        <begin position="1"/>
        <end position="407"/>
    </location>
</feature>
<feature type="topological domain" description="Extracellular" evidence="2">
    <location>
        <begin position="1"/>
        <end position="31"/>
    </location>
</feature>
<feature type="transmembrane region" description="Helical; Name=1" evidence="2">
    <location>
        <begin position="32"/>
        <end position="54"/>
    </location>
</feature>
<feature type="topological domain" description="Cytoplasmic" evidence="2">
    <location>
        <begin position="55"/>
        <end position="64"/>
    </location>
</feature>
<feature type="transmembrane region" description="Helical; Name=2" evidence="2">
    <location>
        <begin position="65"/>
        <end position="86"/>
    </location>
</feature>
<feature type="topological domain" description="Extracellular" evidence="2">
    <location>
        <begin position="87"/>
        <end position="106"/>
    </location>
</feature>
<feature type="transmembrane region" description="Helical; Name=3" evidence="2">
    <location>
        <begin position="107"/>
        <end position="128"/>
    </location>
</feature>
<feature type="topological domain" description="Cytoplasmic" evidence="2">
    <location>
        <begin position="129"/>
        <end position="148"/>
    </location>
</feature>
<feature type="transmembrane region" description="Helical; Name=4" evidence="2">
    <location>
        <begin position="149"/>
        <end position="169"/>
    </location>
</feature>
<feature type="topological domain" description="Extracellular" evidence="2">
    <location>
        <begin position="170"/>
        <end position="194"/>
    </location>
</feature>
<feature type="transmembrane region" description="Helical; Name=5" evidence="2">
    <location>
        <begin position="195"/>
        <end position="219"/>
    </location>
</feature>
<feature type="topological domain" description="Cytoplasmic" evidence="2">
    <location>
        <begin position="220"/>
        <end position="248"/>
    </location>
</feature>
<feature type="transmembrane region" description="Helical; Name=6" evidence="2">
    <location>
        <begin position="249"/>
        <end position="270"/>
    </location>
</feature>
<feature type="topological domain" description="Extracellular" evidence="2">
    <location>
        <begin position="271"/>
        <end position="283"/>
    </location>
</feature>
<feature type="transmembrane region" description="Helical; Name=7" evidence="2">
    <location>
        <begin position="284"/>
        <end position="308"/>
    </location>
</feature>
<feature type="topological domain" description="Cytoplasmic" evidence="2">
    <location>
        <begin position="309"/>
        <end position="407"/>
    </location>
</feature>
<feature type="region of interest" description="Disordered" evidence="4">
    <location>
        <begin position="365"/>
        <end position="407"/>
    </location>
</feature>
<feature type="compositionally biased region" description="Polar residues" evidence="4">
    <location>
        <begin position="376"/>
        <end position="407"/>
    </location>
</feature>
<feature type="lipid moiety-binding region" description="S-palmitoyl cysteine" evidence="2">
    <location>
        <position position="322"/>
    </location>
</feature>
<feature type="glycosylation site" description="N-linked (GlcNAc...) asparagine" evidence="2">
    <location>
        <position position="14"/>
    </location>
</feature>
<feature type="glycosylation site" description="N-linked (GlcNAc...) asparagine" evidence="2">
    <location>
        <position position="18"/>
    </location>
</feature>
<feature type="glycosylation site" description="N-linked (GlcNAc...) asparagine" evidence="2">
    <location>
        <position position="89"/>
    </location>
</feature>
<feature type="glycosylation site" description="N-linked (GlcNAc...) asparagine" evidence="2">
    <location>
        <position position="189"/>
    </location>
</feature>
<feature type="disulfide bond" evidence="3">
    <location>
        <begin position="105"/>
        <end position="180"/>
    </location>
</feature>
<name>NK1R_MERUN</name>
<protein>
    <recommendedName>
        <fullName>Substance-P receptor</fullName>
        <shortName>SPR</shortName>
    </recommendedName>
    <alternativeName>
        <fullName>NK-1 receptor</fullName>
        <shortName>NK-1R</shortName>
    </alternativeName>
    <alternativeName>
        <fullName>Tachykinin receptor 1</fullName>
    </alternativeName>
</protein>
<organism>
    <name type="scientific">Meriones unguiculatus</name>
    <name type="common">Mongolian jird</name>
    <name type="synonym">Gerbillus unguiculatus</name>
    <dbReference type="NCBI Taxonomy" id="10047"/>
    <lineage>
        <taxon>Eukaryota</taxon>
        <taxon>Metazoa</taxon>
        <taxon>Chordata</taxon>
        <taxon>Craniata</taxon>
        <taxon>Vertebrata</taxon>
        <taxon>Euteleostomi</taxon>
        <taxon>Mammalia</taxon>
        <taxon>Eutheria</taxon>
        <taxon>Euarchontoglires</taxon>
        <taxon>Glires</taxon>
        <taxon>Rodentia</taxon>
        <taxon>Myomorpha</taxon>
        <taxon>Muroidea</taxon>
        <taxon>Muridae</taxon>
        <taxon>Gerbillinae</taxon>
        <taxon>Meriones</taxon>
    </lineage>
</organism>
<keyword id="KW-1003">Cell membrane</keyword>
<keyword id="KW-1015">Disulfide bond</keyword>
<keyword id="KW-0297">G-protein coupled receptor</keyword>
<keyword id="KW-0325">Glycoprotein</keyword>
<keyword id="KW-0449">Lipoprotein</keyword>
<keyword id="KW-0472">Membrane</keyword>
<keyword id="KW-0564">Palmitate</keyword>
<keyword id="KW-0675">Receptor</keyword>
<keyword id="KW-0807">Transducer</keyword>
<keyword id="KW-0812">Transmembrane</keyword>
<keyword id="KW-1133">Transmembrane helix</keyword>